<keyword id="KW-0963">Cytoplasm</keyword>
<keyword id="KW-0255">Endonuclease</keyword>
<keyword id="KW-0378">Hydrolase</keyword>
<keyword id="KW-0479">Metal-binding</keyword>
<keyword id="KW-0540">Nuclease</keyword>
<keyword id="KW-0690">Ribosome biogenesis</keyword>
<keyword id="KW-0698">rRNA processing</keyword>
<keyword id="KW-0862">Zinc</keyword>
<dbReference type="EC" id="3.1.-.-" evidence="1"/>
<dbReference type="EMBL" id="AE017332">
    <property type="protein sequence ID" value="AAV27473.1"/>
    <property type="molecule type" value="Genomic_DNA"/>
</dbReference>
<dbReference type="RefSeq" id="WP_011206061.1">
    <property type="nucleotide sequence ID" value="NC_006360.1"/>
</dbReference>
<dbReference type="SMR" id="Q601H8"/>
<dbReference type="GeneID" id="41334456"/>
<dbReference type="KEGG" id="mhy:mhp224"/>
<dbReference type="eggNOG" id="COG0319">
    <property type="taxonomic scope" value="Bacteria"/>
</dbReference>
<dbReference type="HOGENOM" id="CLU_106710_3_0_14"/>
<dbReference type="PhylomeDB" id="Q601H8"/>
<dbReference type="Proteomes" id="UP000006822">
    <property type="component" value="Chromosome"/>
</dbReference>
<dbReference type="GO" id="GO:0005737">
    <property type="term" value="C:cytoplasm"/>
    <property type="evidence" value="ECO:0007669"/>
    <property type="project" value="UniProtKB-SubCell"/>
</dbReference>
<dbReference type="GO" id="GO:0004222">
    <property type="term" value="F:metalloendopeptidase activity"/>
    <property type="evidence" value="ECO:0007669"/>
    <property type="project" value="InterPro"/>
</dbReference>
<dbReference type="GO" id="GO:0004521">
    <property type="term" value="F:RNA endonuclease activity"/>
    <property type="evidence" value="ECO:0007669"/>
    <property type="project" value="UniProtKB-UniRule"/>
</dbReference>
<dbReference type="GO" id="GO:0008270">
    <property type="term" value="F:zinc ion binding"/>
    <property type="evidence" value="ECO:0007669"/>
    <property type="project" value="UniProtKB-UniRule"/>
</dbReference>
<dbReference type="GO" id="GO:0006364">
    <property type="term" value="P:rRNA processing"/>
    <property type="evidence" value="ECO:0007669"/>
    <property type="project" value="UniProtKB-UniRule"/>
</dbReference>
<dbReference type="Gene3D" id="3.40.390.30">
    <property type="entry name" value="Metalloproteases ('zincins'), catalytic domain"/>
    <property type="match status" value="1"/>
</dbReference>
<dbReference type="HAMAP" id="MF_00009">
    <property type="entry name" value="Endoribonucl_YbeY"/>
    <property type="match status" value="1"/>
</dbReference>
<dbReference type="InterPro" id="IPR023091">
    <property type="entry name" value="MetalPrtase_cat_dom_sf_prd"/>
</dbReference>
<dbReference type="InterPro" id="IPR002036">
    <property type="entry name" value="YbeY"/>
</dbReference>
<dbReference type="InterPro" id="IPR020549">
    <property type="entry name" value="YbeY_CS"/>
</dbReference>
<dbReference type="NCBIfam" id="TIGR00043">
    <property type="entry name" value="rRNA maturation RNase YbeY"/>
    <property type="match status" value="1"/>
</dbReference>
<dbReference type="PANTHER" id="PTHR46986">
    <property type="entry name" value="ENDORIBONUCLEASE YBEY, CHLOROPLASTIC"/>
    <property type="match status" value="1"/>
</dbReference>
<dbReference type="PANTHER" id="PTHR46986:SF1">
    <property type="entry name" value="ENDORIBONUCLEASE YBEY, CHLOROPLASTIC"/>
    <property type="match status" value="1"/>
</dbReference>
<dbReference type="Pfam" id="PF02130">
    <property type="entry name" value="YbeY"/>
    <property type="match status" value="1"/>
</dbReference>
<dbReference type="SUPFAM" id="SSF55486">
    <property type="entry name" value="Metalloproteases ('zincins'), catalytic domain"/>
    <property type="match status" value="1"/>
</dbReference>
<dbReference type="PROSITE" id="PS01306">
    <property type="entry name" value="UPF0054"/>
    <property type="match status" value="1"/>
</dbReference>
<feature type="chain" id="PRO_0000102487" description="Endoribonuclease YbeY">
    <location>
        <begin position="1"/>
        <end position="150"/>
    </location>
</feature>
<feature type="binding site" evidence="1">
    <location>
        <position position="116"/>
    </location>
    <ligand>
        <name>Zn(2+)</name>
        <dbReference type="ChEBI" id="CHEBI:29105"/>
        <note>catalytic</note>
    </ligand>
</feature>
<feature type="binding site" evidence="1">
    <location>
        <position position="120"/>
    </location>
    <ligand>
        <name>Zn(2+)</name>
        <dbReference type="ChEBI" id="CHEBI:29105"/>
        <note>catalytic</note>
    </ligand>
</feature>
<feature type="binding site" evidence="1">
    <location>
        <position position="126"/>
    </location>
    <ligand>
        <name>Zn(2+)</name>
        <dbReference type="ChEBI" id="CHEBI:29105"/>
        <note>catalytic</note>
    </ligand>
</feature>
<evidence type="ECO:0000255" key="1">
    <source>
        <dbReference type="HAMAP-Rule" id="MF_00009"/>
    </source>
</evidence>
<proteinExistence type="inferred from homology"/>
<reference key="1">
    <citation type="journal article" date="2004" name="J. Bacteriol.">
        <title>The genome sequence of Mycoplasma hyopneumoniae strain 232, the agent of swine mycoplasmosis.</title>
        <authorList>
            <person name="Minion F.C."/>
            <person name="Lefkowitz E.J."/>
            <person name="Madsen M.L."/>
            <person name="Cleary B.J."/>
            <person name="Swartzell S.M."/>
            <person name="Mahairas G.G."/>
        </authorList>
    </citation>
    <scope>NUCLEOTIDE SEQUENCE [LARGE SCALE GENOMIC DNA]</scope>
    <source>
        <strain>232</strain>
    </source>
</reference>
<gene>
    <name evidence="1" type="primary">ybeY</name>
    <name type="ordered locus">mhp224</name>
</gene>
<name>YBEY_MESH2</name>
<sequence>MKAKINFLNQSRIKFKYLKLFRKIFKLLVEKEQITGEISLDLMLITQRKAQKLAIKFKNINYIPDVLSFPSNLIIAKKNFRLHFLGEIFMTPAKIIKQANEYGHSEEREFSYLFVHSIYHLLGFDHQDEKTNKLMDEKVENILINLGINR</sequence>
<protein>
    <recommendedName>
        <fullName evidence="1">Endoribonuclease YbeY</fullName>
        <ecNumber evidence="1">3.1.-.-</ecNumber>
    </recommendedName>
</protein>
<comment type="function">
    <text evidence="1">Single strand-specific metallo-endoribonuclease involved in late-stage 70S ribosome quality control and in maturation of the 3' terminus of the 16S rRNA.</text>
</comment>
<comment type="cofactor">
    <cofactor evidence="1">
        <name>Zn(2+)</name>
        <dbReference type="ChEBI" id="CHEBI:29105"/>
    </cofactor>
    <text evidence="1">Binds 1 zinc ion.</text>
</comment>
<comment type="subcellular location">
    <subcellularLocation>
        <location evidence="1">Cytoplasm</location>
    </subcellularLocation>
</comment>
<comment type="similarity">
    <text evidence="1">Belongs to the endoribonuclease YbeY family.</text>
</comment>
<organism>
    <name type="scientific">Mesomycoplasma hyopneumoniae (strain 232)</name>
    <name type="common">Mycoplasma hyopneumoniae</name>
    <dbReference type="NCBI Taxonomy" id="295358"/>
    <lineage>
        <taxon>Bacteria</taxon>
        <taxon>Bacillati</taxon>
        <taxon>Mycoplasmatota</taxon>
        <taxon>Mycoplasmoidales</taxon>
        <taxon>Metamycoplasmataceae</taxon>
        <taxon>Mesomycoplasma</taxon>
    </lineage>
</organism>
<accession>Q601H8</accession>